<organism>
    <name type="scientific">Cereibacter sphaeroides (strain ATCC 17029 / ATH 2.4.9)</name>
    <name type="common">Rhodobacter sphaeroides</name>
    <dbReference type="NCBI Taxonomy" id="349101"/>
    <lineage>
        <taxon>Bacteria</taxon>
        <taxon>Pseudomonadati</taxon>
        <taxon>Pseudomonadota</taxon>
        <taxon>Alphaproteobacteria</taxon>
        <taxon>Rhodobacterales</taxon>
        <taxon>Paracoccaceae</taxon>
        <taxon>Cereibacter</taxon>
    </lineage>
</organism>
<keyword id="KW-0131">Cell cycle</keyword>
<keyword id="KW-0132">Cell division</keyword>
<keyword id="KW-0143">Chaperone</keyword>
<keyword id="KW-0963">Cytoplasm</keyword>
<keyword id="KW-0413">Isomerase</keyword>
<keyword id="KW-0697">Rotamase</keyword>
<accession>A3PKL8</accession>
<dbReference type="EC" id="5.2.1.8" evidence="1"/>
<dbReference type="EMBL" id="CP000577">
    <property type="protein sequence ID" value="ABN76884.1"/>
    <property type="molecule type" value="Genomic_DNA"/>
</dbReference>
<dbReference type="RefSeq" id="WP_002720285.1">
    <property type="nucleotide sequence ID" value="NC_009049.1"/>
</dbReference>
<dbReference type="SMR" id="A3PKL8"/>
<dbReference type="GeneID" id="3719562"/>
<dbReference type="KEGG" id="rsh:Rsph17029_1775"/>
<dbReference type="HOGENOM" id="CLU_033058_2_2_5"/>
<dbReference type="GO" id="GO:0005737">
    <property type="term" value="C:cytoplasm"/>
    <property type="evidence" value="ECO:0007669"/>
    <property type="project" value="UniProtKB-SubCell"/>
</dbReference>
<dbReference type="GO" id="GO:0003755">
    <property type="term" value="F:peptidyl-prolyl cis-trans isomerase activity"/>
    <property type="evidence" value="ECO:0007669"/>
    <property type="project" value="UniProtKB-UniRule"/>
</dbReference>
<dbReference type="GO" id="GO:0051301">
    <property type="term" value="P:cell division"/>
    <property type="evidence" value="ECO:0007669"/>
    <property type="project" value="UniProtKB-KW"/>
</dbReference>
<dbReference type="GO" id="GO:0006457">
    <property type="term" value="P:protein folding"/>
    <property type="evidence" value="ECO:0007669"/>
    <property type="project" value="UniProtKB-UniRule"/>
</dbReference>
<dbReference type="GO" id="GO:0015031">
    <property type="term" value="P:protein transport"/>
    <property type="evidence" value="ECO:0007669"/>
    <property type="project" value="UniProtKB-UniRule"/>
</dbReference>
<dbReference type="FunFam" id="3.10.50.40:FF:000001">
    <property type="entry name" value="Trigger factor"/>
    <property type="match status" value="1"/>
</dbReference>
<dbReference type="Gene3D" id="3.10.50.40">
    <property type="match status" value="1"/>
</dbReference>
<dbReference type="Gene3D" id="3.30.70.1050">
    <property type="entry name" value="Trigger factor ribosome-binding domain"/>
    <property type="match status" value="1"/>
</dbReference>
<dbReference type="Gene3D" id="1.10.3120.10">
    <property type="entry name" value="Trigger factor, C-terminal domain"/>
    <property type="match status" value="1"/>
</dbReference>
<dbReference type="HAMAP" id="MF_00303">
    <property type="entry name" value="Trigger_factor_Tig"/>
    <property type="match status" value="1"/>
</dbReference>
<dbReference type="InterPro" id="IPR046357">
    <property type="entry name" value="PPIase_dom_sf"/>
</dbReference>
<dbReference type="InterPro" id="IPR001179">
    <property type="entry name" value="PPIase_FKBP_dom"/>
</dbReference>
<dbReference type="InterPro" id="IPR005215">
    <property type="entry name" value="Trig_fac"/>
</dbReference>
<dbReference type="InterPro" id="IPR008880">
    <property type="entry name" value="Trigger_fac_C"/>
</dbReference>
<dbReference type="InterPro" id="IPR037041">
    <property type="entry name" value="Trigger_fac_C_sf"/>
</dbReference>
<dbReference type="InterPro" id="IPR008881">
    <property type="entry name" value="Trigger_fac_ribosome-bd_bac"/>
</dbReference>
<dbReference type="InterPro" id="IPR036611">
    <property type="entry name" value="Trigger_fac_ribosome-bd_sf"/>
</dbReference>
<dbReference type="InterPro" id="IPR027304">
    <property type="entry name" value="Trigger_fact/SurA_dom_sf"/>
</dbReference>
<dbReference type="NCBIfam" id="TIGR00115">
    <property type="entry name" value="tig"/>
    <property type="match status" value="1"/>
</dbReference>
<dbReference type="Pfam" id="PF00254">
    <property type="entry name" value="FKBP_C"/>
    <property type="match status" value="1"/>
</dbReference>
<dbReference type="Pfam" id="PF05698">
    <property type="entry name" value="Trigger_C"/>
    <property type="match status" value="1"/>
</dbReference>
<dbReference type="Pfam" id="PF05697">
    <property type="entry name" value="Trigger_N"/>
    <property type="match status" value="1"/>
</dbReference>
<dbReference type="PIRSF" id="PIRSF003095">
    <property type="entry name" value="Trigger_factor"/>
    <property type="match status" value="1"/>
</dbReference>
<dbReference type="SUPFAM" id="SSF54534">
    <property type="entry name" value="FKBP-like"/>
    <property type="match status" value="1"/>
</dbReference>
<dbReference type="SUPFAM" id="SSF109998">
    <property type="entry name" value="Triger factor/SurA peptide-binding domain-like"/>
    <property type="match status" value="1"/>
</dbReference>
<dbReference type="SUPFAM" id="SSF102735">
    <property type="entry name" value="Trigger factor ribosome-binding domain"/>
    <property type="match status" value="1"/>
</dbReference>
<dbReference type="PROSITE" id="PS50059">
    <property type="entry name" value="FKBP_PPIASE"/>
    <property type="match status" value="1"/>
</dbReference>
<reference key="1">
    <citation type="submission" date="2007-02" db="EMBL/GenBank/DDBJ databases">
        <title>Complete sequence of chromosome 1 of Rhodobacter sphaeroides ATCC 17029.</title>
        <authorList>
            <person name="Copeland A."/>
            <person name="Lucas S."/>
            <person name="Lapidus A."/>
            <person name="Barry K."/>
            <person name="Detter J.C."/>
            <person name="Glavina del Rio T."/>
            <person name="Hammon N."/>
            <person name="Israni S."/>
            <person name="Dalin E."/>
            <person name="Tice H."/>
            <person name="Pitluck S."/>
            <person name="Kiss H."/>
            <person name="Brettin T."/>
            <person name="Bruce D."/>
            <person name="Han C."/>
            <person name="Tapia R."/>
            <person name="Gilna P."/>
            <person name="Schmutz J."/>
            <person name="Larimer F."/>
            <person name="Land M."/>
            <person name="Hauser L."/>
            <person name="Kyrpides N."/>
            <person name="Mikhailova N."/>
            <person name="Richardson P."/>
            <person name="Mackenzie C."/>
            <person name="Choudhary M."/>
            <person name="Donohue T.J."/>
            <person name="Kaplan S."/>
        </authorList>
    </citation>
    <scope>NUCLEOTIDE SEQUENCE [LARGE SCALE GENOMIC DNA]</scope>
    <source>
        <strain>ATCC 17029 / ATH 2.4.9</strain>
    </source>
</reference>
<comment type="function">
    <text evidence="1">Involved in protein export. Acts as a chaperone by maintaining the newly synthesized protein in an open conformation. Functions as a peptidyl-prolyl cis-trans isomerase.</text>
</comment>
<comment type="catalytic activity">
    <reaction evidence="1">
        <text>[protein]-peptidylproline (omega=180) = [protein]-peptidylproline (omega=0)</text>
        <dbReference type="Rhea" id="RHEA:16237"/>
        <dbReference type="Rhea" id="RHEA-COMP:10747"/>
        <dbReference type="Rhea" id="RHEA-COMP:10748"/>
        <dbReference type="ChEBI" id="CHEBI:83833"/>
        <dbReference type="ChEBI" id="CHEBI:83834"/>
        <dbReference type="EC" id="5.2.1.8"/>
    </reaction>
</comment>
<comment type="subcellular location">
    <subcellularLocation>
        <location>Cytoplasm</location>
    </subcellularLocation>
    <text evidence="1">About half TF is bound to the ribosome near the polypeptide exit tunnel while the other half is free in the cytoplasm.</text>
</comment>
<comment type="domain">
    <text evidence="1">Consists of 3 domains; the N-terminus binds the ribosome, the middle domain has PPIase activity, while the C-terminus has intrinsic chaperone activity on its own.</text>
</comment>
<comment type="similarity">
    <text evidence="1">Belongs to the FKBP-type PPIase family. Tig subfamily.</text>
</comment>
<protein>
    <recommendedName>
        <fullName evidence="1">Trigger factor</fullName>
        <shortName evidence="1">TF</shortName>
        <ecNumber evidence="1">5.2.1.8</ecNumber>
    </recommendedName>
    <alternativeName>
        <fullName evidence="1">PPIase</fullName>
    </alternativeName>
</protein>
<proteinExistence type="inferred from homology"/>
<sequence>MQVTETQKEGLKRAYTITVTAAELDAKVQEKLVEAQPDIEMKGFRKGKVPLAMLKKQFGPRLLGDAMQDAIDGAMRDHLETSGDRPAMQPEVRMVDGETWKEGTDVVVEMKYEALPEIPEIETSKVSLERLVVKADEAAIEEALKNLAESAQNFEDRRKGSKAKDGDQVVIDFKGSVDGELFEGGSAEDYPLVLGSGSFIPGFEEQLVGTKVDDEVTVKVSFPAEYGAKHLAGKEAEFACTVKAVKAPKAAELDDELAKKYGAEDLAALKSQISERLEAEYKGASRAVLKRALLDQLDQMVSFELPSKLVEAEAHQIAHQLWHEEHPEEHGHNHGNIEPTDEHKALAERRVRLGLLLAEIGRKAEVTVTDAEMTQAVLAQARQYPGQERAYFEFVQKNPQIQQQLRAPIFEDKVVDLILEGATVTEKEVGKDDLQKAIEALDEM</sequence>
<feature type="chain" id="PRO_1000022742" description="Trigger factor">
    <location>
        <begin position="1"/>
        <end position="444"/>
    </location>
</feature>
<feature type="domain" description="PPIase FKBP-type" evidence="1">
    <location>
        <begin position="166"/>
        <end position="251"/>
    </location>
</feature>
<name>TIG_CERS1</name>
<evidence type="ECO:0000255" key="1">
    <source>
        <dbReference type="HAMAP-Rule" id="MF_00303"/>
    </source>
</evidence>
<gene>
    <name evidence="1" type="primary">tig</name>
    <name type="ordered locus">Rsph17029_1775</name>
</gene>